<gene>
    <name type="primary">ADRA1A</name>
    <name type="synonym">ADRA1C</name>
</gene>
<feature type="chain" id="PRO_0000069063" description="Alpha-1A adrenergic receptor">
    <location>
        <begin position="1"/>
        <end position="466"/>
    </location>
</feature>
<feature type="topological domain" description="Extracellular" evidence="1">
    <location>
        <begin position="1"/>
        <end position="27"/>
    </location>
</feature>
<feature type="transmembrane region" description="Helical; Name=1" evidence="1">
    <location>
        <begin position="28"/>
        <end position="51"/>
    </location>
</feature>
<feature type="topological domain" description="Cytoplasmic" evidence="1">
    <location>
        <begin position="52"/>
        <end position="64"/>
    </location>
</feature>
<feature type="transmembrane region" description="Helical; Name=2" evidence="1">
    <location>
        <begin position="65"/>
        <end position="88"/>
    </location>
</feature>
<feature type="topological domain" description="Extracellular" evidence="1">
    <location>
        <begin position="89"/>
        <end position="99"/>
    </location>
</feature>
<feature type="transmembrane region" description="Helical; Name=3" evidence="1">
    <location>
        <begin position="100"/>
        <end position="122"/>
    </location>
</feature>
<feature type="topological domain" description="Cytoplasmic" evidence="1">
    <location>
        <begin position="123"/>
        <end position="143"/>
    </location>
</feature>
<feature type="transmembrane region" description="Helical; Name=4" evidence="1">
    <location>
        <begin position="144"/>
        <end position="167"/>
    </location>
</feature>
<feature type="topological domain" description="Extracellular" evidence="1">
    <location>
        <begin position="168"/>
        <end position="181"/>
    </location>
</feature>
<feature type="transmembrane region" description="Helical; Name=5" evidence="1">
    <location>
        <begin position="182"/>
        <end position="205"/>
    </location>
</feature>
<feature type="topological domain" description="Cytoplasmic" evidence="1">
    <location>
        <begin position="206"/>
        <end position="273"/>
    </location>
</feature>
<feature type="transmembrane region" description="Helical; Name=6" evidence="1">
    <location>
        <begin position="274"/>
        <end position="297"/>
    </location>
</feature>
<feature type="topological domain" description="Extracellular" evidence="1">
    <location>
        <begin position="298"/>
        <end position="305"/>
    </location>
</feature>
<feature type="transmembrane region" description="Helical; Name=7" evidence="1">
    <location>
        <begin position="306"/>
        <end position="329"/>
    </location>
</feature>
<feature type="topological domain" description="Cytoplasmic" evidence="1">
    <location>
        <begin position="330"/>
        <end position="466"/>
    </location>
</feature>
<feature type="short sequence motif" description="Nuclear localization signal">
    <location>
        <begin position="334"/>
        <end position="349"/>
    </location>
</feature>
<feature type="modified residue" description="Phosphoserine; by PKA" evidence="2">
    <location>
        <position position="215"/>
    </location>
</feature>
<feature type="lipid moiety-binding region" description="S-palmitoyl cysteine" evidence="2">
    <location>
        <position position="345"/>
    </location>
</feature>
<feature type="glycosylation site" description="N-linked (GlcNAc...) asparagine" evidence="2">
    <location>
        <position position="7"/>
    </location>
</feature>
<feature type="glycosylation site" description="N-linked (GlcNAc...) asparagine" evidence="2">
    <location>
        <position position="13"/>
    </location>
</feature>
<feature type="glycosylation site" description="N-linked (GlcNAc...) asparagine" evidence="2">
    <location>
        <position position="22"/>
    </location>
</feature>
<feature type="disulfide bond" evidence="3">
    <location>
        <begin position="99"/>
        <end position="176"/>
    </location>
</feature>
<feature type="splice variant" id="VSP_011046" description="In isoform 8." evidence="18">
    <original>GSFFPDFKPSETVFKIVFWLGYLNSCINPIIYPCSSQEFKKAFQNVLRIQCLCRKQSSKHALGYTLHPPSQAVEGQHKDMVRIPVGSRETFYRISKTDGVCEWKFFSSMPRGSARITVSKDQSSCTTARVRSKSFLQVCCCVGPSTPSLDKNHQVPTIKVHTISLSENGEEV</original>
    <variation>DEVSLCHQAGVQWHDLGSLQPPPPGFKRFSCLSLPSSWDYRDVPPGRRHQAQLIFVFLVETGFHHVGQDDLDLLTS</variation>
    <location>
        <begin position="295"/>
        <end position="466"/>
    </location>
</feature>
<feature type="splice variant" id="VSP_011053" description="In isoform 6." evidence="18">
    <original>GSFFPDFKPSETVFKIVFWLGYLNSCINPIIYPCSSQEFKKAFQNVLR</original>
    <variation>DEETEAQEGKNDSPSFKQPVHHAAVLGLEVMEKENLEGVSRKDTCGVW</variation>
    <location>
        <begin position="295"/>
        <end position="342"/>
    </location>
</feature>
<feature type="splice variant" id="VSP_011049" description="In isoform 9." evidence="18">
    <original>SFFPDFKPSETVFKIVFWLGYLNSCINPIIYPCSSQEFKKAFQNVLRIQCLCRKQSSKHALGYTLHPPSQAVEGQHKDMVRIPVGSRETFYRISKTDGVCEWKFFSSMPRGSARITVSKDQSSCTTARVRSKSFLQVCCCVGPSTPSLDKNHQVPTIKVHTISLSENGEEV</original>
    <variation>THTHDMKPASRPRLLSLLPKEGEHETHHWSCDPLSLESTPGAQEPCLTLGFTSLSSIHLTKAQIQHVTVTDTGKTVT</variation>
    <location>
        <begin position="296"/>
        <end position="466"/>
    </location>
</feature>
<feature type="splice variant" id="VSP_011047" description="In isoform 7." evidence="18">
    <original>SFFPDFKPSETVFKIVFWLGYLNSCINPI</original>
    <variation>TYILKYDVLFWRKGLSVCTRLRERKEIKN</variation>
    <location>
        <begin position="296"/>
        <end position="324"/>
    </location>
</feature>
<feature type="splice variant" id="VSP_011051" description="In isoform 5." evidence="18">
    <original>SF</original>
    <variation>KS</variation>
    <location>
        <begin position="296"/>
        <end position="297"/>
    </location>
</feature>
<feature type="splice variant" id="VSP_011052" description="In isoform 5." evidence="18">
    <location>
        <begin position="298"/>
        <end position="466"/>
    </location>
</feature>
<feature type="splice variant" id="VSP_011048" description="In isoform 7." evidence="18">
    <location>
        <begin position="325"/>
        <end position="466"/>
    </location>
</feature>
<feature type="splice variant" id="VSP_011054" description="In isoform 6." evidence="18">
    <location>
        <begin position="343"/>
        <end position="466"/>
    </location>
</feature>
<feature type="splice variant" id="VSP_011055" description="In isoform 2." evidence="19">
    <original>VRSKSFLQVCCCVGPSTPSLDKNHQVPTIKVHTISLSENGEEV</original>
    <variation>TKSRSVTRLECSGMILAHCNLRLPGSRDSPASASQAAGTTGMCHQADATRPS</variation>
    <location>
        <begin position="424"/>
        <end position="466"/>
    </location>
</feature>
<feature type="splice variant" id="VSP_011050" description="In isoform 4." evidence="20">
    <original>VRSKSFLQVCCCVGPSTPSLDKNHQVPTIKVHTISLSENGEEV</original>
    <variation>RGMDCRYFTKNCREHIKHVNFMMPPWRKGSEC</variation>
    <location>
        <begin position="424"/>
        <end position="466"/>
    </location>
</feature>
<feature type="splice variant" id="VSP_011044" description="In isoform 3." evidence="19">
    <original>VRSKSF</original>
    <variation>GHTPMT</variation>
    <location>
        <begin position="424"/>
        <end position="429"/>
    </location>
</feature>
<feature type="splice variant" id="VSP_011045" description="In isoform 3." evidence="19">
    <location>
        <begin position="430"/>
        <end position="466"/>
    </location>
</feature>
<feature type="sequence variant" id="VAR_035756" description="In a breast cancer sample; somatic mutation." evidence="6">
    <original>G</original>
    <variation>W</variation>
    <location>
        <position position="40"/>
    </location>
</feature>
<feature type="sequence variant" id="VAR_049370" description="In dbSNP:rs2229125.">
    <original>I</original>
    <variation>S</variation>
    <location>
        <position position="200"/>
    </location>
</feature>
<feature type="sequence variant" id="VAR_019509" description="In dbSNP:rs1048101." evidence="4 5 10 11 12 13 14 15 16">
    <original>C</original>
    <variation>R</variation>
    <location>
        <position position="347"/>
    </location>
</feature>
<feature type="sequence variant" id="VAR_049371" description="In dbSNP:rs3730247.">
    <original>K</original>
    <variation>R</variation>
    <location>
        <position position="414"/>
    </location>
</feature>
<feature type="sequence variant" id="VAR_049372" description="In dbSNP:rs2229126.">
    <original>E</original>
    <variation>D</variation>
    <location>
        <position position="465"/>
    </location>
</feature>
<feature type="mutagenesis site" description="Abolishes targeting to the nuclear membrane of cardiac myocytes; when associated with A-335; A-342; A-348 and A-349." evidence="8">
    <original>K</original>
    <variation>A</variation>
    <location>
        <position position="334"/>
    </location>
</feature>
<feature type="mutagenesis site" description="Abolishes targeting to the nuclear membrane of cardiac myocytes; when associated with A-334; A-342; A-348 and A-349." evidence="8">
    <original>K</original>
    <variation>A</variation>
    <location>
        <position position="335"/>
    </location>
</feature>
<feature type="mutagenesis site" description="Abolishes targeting to the nuclear membrane of cardiac myocytes; when associated with A-334; A-335; A-348 and A-349." evidence="8">
    <original>R</original>
    <variation>A</variation>
    <location>
        <position position="342"/>
    </location>
</feature>
<feature type="mutagenesis site" description="Abolishes targeting to the nuclear membrane of cardiac myocytes; when associated with A-334; A-335; A-342 and A-349." evidence="8">
    <original>R</original>
    <variation>A</variation>
    <location>
        <position position="348"/>
    </location>
</feature>
<feature type="mutagenesis site" description="Abolishes targeting to the nuclear membrane of cardiac myocytes; when associated with A-334; A-335; A-342 and A-348." evidence="8">
    <original>K</original>
    <variation>A</variation>
    <location>
        <position position="349"/>
    </location>
</feature>
<feature type="sequence conflict" description="In Ref. 4; AAA93114." evidence="21" ref="4">
    <original>G</original>
    <variation>C</variation>
    <location>
        <position position="43"/>
    </location>
</feature>
<feature type="sequence conflict" description="In Ref. 4; AAA93114." evidence="21" ref="4">
    <original>S</original>
    <variation>T</variation>
    <location>
        <position position="129"/>
    </location>
</feature>
<feature type="sequence conflict" description="In Ref. 9; AAK77197." evidence="21" ref="9">
    <original>Y</original>
    <variation>H</variation>
    <location>
        <position position="130"/>
    </location>
</feature>
<feature type="sequence conflict" description="In Ref. 14; AAH95512." evidence="21" ref="14">
    <original>V</original>
    <variation>A</variation>
    <location>
        <position position="185"/>
    </location>
</feature>
<feature type="sequence conflict" description="In Ref. 2." evidence="21" ref="2">
    <original>Q</original>
    <variation>C</variation>
    <location>
        <position position="338"/>
    </location>
</feature>
<feature type="sequence conflict" description="In Ref. 4; AAA93114." evidence="21" ref="4">
    <original>T</original>
    <variation>P</variation>
    <location>
        <position position="359"/>
    </location>
</feature>
<feature type="sequence conflict" description="In Ref. 9; AAK77197." evidence="21" ref="9">
    <original>T</original>
    <variation>A</variation>
    <location>
        <position position="384"/>
    </location>
</feature>
<feature type="sequence conflict" description="In Ref. 9; AAK77197." evidence="21" ref="9">
    <original>R</original>
    <variation>G</variation>
    <location>
        <position position="387"/>
    </location>
</feature>
<feature type="sequence conflict" description="In Ref. 9; AAK77197." evidence="21" ref="9">
    <original>K</original>
    <variation>R</variation>
    <location>
        <position position="390"/>
    </location>
</feature>
<feature type="sequence conflict" description="In Ref. 1; BAA04960." evidence="21" ref="1">
    <original>Q</original>
    <variation>E</variation>
    <location>
        <position position="431"/>
    </location>
</feature>
<feature type="sequence conflict" description="In Ref. 9; AAK77197." evidence="21" ref="9">
    <original>G</original>
    <variation>E</variation>
    <location>
        <position position="437"/>
    </location>
</feature>
<feature type="sequence conflict" description="In Ref. 4; AAA93114." evidence="21" ref="4">
    <original>S</original>
    <variation>C</variation>
    <location>
        <position position="442"/>
    </location>
</feature>
<feature type="helix" evidence="24">
    <location>
        <begin position="34"/>
        <end position="53"/>
    </location>
</feature>
<feature type="turn" evidence="24">
    <location>
        <begin position="55"/>
        <end position="58"/>
    </location>
</feature>
<feature type="helix" evidence="24">
    <location>
        <begin position="60"/>
        <end position="89"/>
    </location>
</feature>
<feature type="helix" evidence="24">
    <location>
        <begin position="96"/>
        <end position="100"/>
    </location>
</feature>
<feature type="helix" evidence="24">
    <location>
        <begin position="102"/>
        <end position="129"/>
    </location>
</feature>
<feature type="turn" evidence="23">
    <location>
        <begin position="131"/>
        <end position="133"/>
    </location>
</feature>
<feature type="helix" evidence="24">
    <location>
        <begin position="134"/>
        <end position="137"/>
    </location>
</feature>
<feature type="turn" evidence="24">
    <location>
        <begin position="140"/>
        <end position="142"/>
    </location>
</feature>
<feature type="helix" evidence="24">
    <location>
        <begin position="143"/>
        <end position="158"/>
    </location>
</feature>
<feature type="helix" evidence="24">
    <location>
        <begin position="161"/>
        <end position="163"/>
    </location>
</feature>
<feature type="strand" evidence="23">
    <location>
        <begin position="172"/>
        <end position="174"/>
    </location>
</feature>
<feature type="helix" evidence="24">
    <location>
        <begin position="182"/>
        <end position="214"/>
    </location>
</feature>
<feature type="strand" evidence="23">
    <location>
        <begin position="260"/>
        <end position="264"/>
    </location>
</feature>
<feature type="helix" evidence="24">
    <location>
        <begin position="269"/>
        <end position="297"/>
    </location>
</feature>
<feature type="helix" evidence="24">
    <location>
        <begin position="299"/>
        <end position="301"/>
    </location>
</feature>
<feature type="helix" evidence="24">
    <location>
        <begin position="305"/>
        <end position="325"/>
    </location>
</feature>
<feature type="helix" evidence="22">
    <location>
        <begin position="327"/>
        <end position="329"/>
    </location>
</feature>
<feature type="helix" evidence="23">
    <location>
        <begin position="332"/>
        <end position="342"/>
    </location>
</feature>
<feature type="sequence conflict" description="In Ref. 7; AAC06138." evidence="21" ref="7">
    <original>S</original>
    <variation>L</variation>
    <location sequence="P35348-4">
        <position position="453"/>
    </location>
</feature>
<feature type="sequence conflict" description="In Ref. 8; AAR84650." evidence="21" ref="8">
    <original>E</original>
    <variation>Q</variation>
    <location sequence="P35348-6">
        <position position="302"/>
    </location>
</feature>
<name>ADA1A_HUMAN</name>
<reference key="1">
    <citation type="journal article" date="1993" name="Biochem. Biophys. Res. Commun.">
        <title>Cloning, functional expression and tissue distribution of human cDNA for the alpha 1C-adrenergic receptor.</title>
        <authorList>
            <person name="Hirasawa A."/>
            <person name="Horie K."/>
            <person name="Tanaka T."/>
            <person name="Takagaki K."/>
            <person name="Murai M."/>
            <person name="Yano J."/>
            <person name="Tsujimoto G."/>
        </authorList>
    </citation>
    <scope>NUCLEOTIDE SEQUENCE [GENOMIC DNA / MRNA] (ISOFORM 1)</scope>
    <scope>VARIANT ARG-347</scope>
    <source>
        <tissue>Prostate</tissue>
    </source>
</reference>
<reference key="2">
    <citation type="journal article" date="1994" name="Biochem. Biophys. Res. Commun.">
        <title>Cloning, expression and characterization of human alpha adrenergic receptors alpha 1a, alpha 1b and alpha 1c.</title>
        <authorList>
            <person name="Weinberg D.H."/>
            <person name="Trivedi P."/>
            <person name="Tan C.P."/>
            <person name="Mitra S."/>
            <person name="Perkins-Barrow A."/>
            <person name="Borkowski D."/>
            <person name="Strader C.D."/>
            <person name="Bayne M."/>
        </authorList>
    </citation>
    <scope>NUCLEOTIDE SEQUENCE [MRNA] (ISOFORM 1)</scope>
    <scope>VARIANT ARG-347</scope>
    <source>
        <tissue>Heart</tissue>
    </source>
</reference>
<reference key="3">
    <citation type="journal article" date="1994" name="Mol. Pharmacol.">
        <title>The alpha 1-adrenergic receptor that mediates smooth muscle contraction in human prostate has the pharmacological properties of the cloned human alpha 1c subtype.</title>
        <authorList>
            <person name="Forray C."/>
            <person name="Bard J.A."/>
            <person name="Wetzel J.M."/>
            <person name="Chiu G."/>
            <person name="Shapiro E."/>
            <person name="Tang R."/>
            <person name="Lepor H."/>
            <person name="Hartig P.R."/>
            <person name="Weinshank R.L."/>
            <person name="Branchek T.A."/>
            <person name="Gluchowski C."/>
        </authorList>
    </citation>
    <scope>NUCLEOTIDE SEQUENCE [GENOMIC DNA] (ISOFORM 1)</scope>
    <source>
        <tissue>Hippocampus</tissue>
        <tissue>Lymphocyte</tissue>
    </source>
</reference>
<reference key="4">
    <citation type="journal article" date="1995" name="Br. J. Pharmacol.">
        <title>The alpha 1C-adrenoceptor in human prostate: cloning, functional expression, and localization to specific prostatic cell types.</title>
        <authorList>
            <person name="Tseng-Crank J."/>
            <person name="Kost T."/>
            <person name="Goetz A."/>
            <person name="Hazum S."/>
            <person name="Roberson K.M."/>
            <person name="Haizlip J."/>
            <person name="Godinot N."/>
            <person name="Robertson C.N."/>
            <person name="Saussy D."/>
        </authorList>
    </citation>
    <scope>NUCLEOTIDE SEQUENCE [MRNA] (ISOFORM 1)</scope>
    <scope>VARIANT ARG-347</scope>
</reference>
<reference key="5">
    <citation type="journal article" date="1995" name="FEBS Lett.">
        <title>Cloning, functional expression and tissue distribution of human alpha 1c-adrenoceptor splice variants.</title>
        <authorList>
            <person name="Hirasawa A."/>
            <person name="Shibata K."/>
            <person name="Horie K."/>
            <person name="Takei Y."/>
            <person name="Obika K."/>
            <person name="Tanaka T."/>
            <person name="Muramoto N."/>
            <person name="Takagaki K."/>
            <person name="Yano J."/>
            <person name="Tsujimoto G."/>
        </authorList>
    </citation>
    <scope>NUCLEOTIDE SEQUENCE [MRNA] (ISOFORMS 2 AND 3)</scope>
    <scope>VARIANT ARG-347</scope>
    <scope>TISSUE SPECIFICITY</scope>
    <source>
        <tissue>Prostate</tissue>
    </source>
</reference>
<reference key="6">
    <citation type="journal article" date="1995" name="J. Pharmacol. Exp. Ther.">
        <title>Cloning and pharmacological characterization of human alpha-1 adrenergic receptors: sequence corrections and direct comparison with other species homologues.</title>
        <authorList>
            <person name="Schwinn D.A."/>
            <person name="Johnston G.I."/>
            <person name="Page S.O."/>
            <person name="Mosley M.J."/>
            <person name="Wilson K.H."/>
            <person name="Worman N.P."/>
            <person name="Campbell S."/>
            <person name="Fidock M.D."/>
            <person name="Furness L.M."/>
            <person name="Parry-Smith D.J."/>
            <person name="Peter B."/>
            <person name="Bailey D.S."/>
        </authorList>
    </citation>
    <scope>NUCLEOTIDE SEQUENCE [MRNA] (ISOFORM 1)</scope>
    <scope>VARIANT ARG-347</scope>
</reference>
<reference key="7">
    <citation type="journal article" date="1998" name="FEBS Lett.">
        <title>Molecular cloning, genomic characterization and expression of novel human alpha1A-adrenoceptor isoforms.</title>
        <authorList>
            <person name="Chang D.J."/>
            <person name="Chang T.K."/>
            <person name="Yamanishi S.S."/>
            <person name="Salazar F.H.R."/>
            <person name="Kosaka A.H."/>
            <person name="Khare R."/>
            <person name="Bhakta S."/>
            <person name="Jasper J.R."/>
            <person name="Shieh I.-S."/>
            <person name="Lesnick J.D."/>
            <person name="Ford A.P.D.W."/>
            <person name="Daniels D.V."/>
            <person name="Clarke D.E."/>
            <person name="Bach C.T."/>
            <person name="Chan H.W."/>
        </authorList>
    </citation>
    <scope>NUCLEOTIDE SEQUENCE [MRNA] (ISOFORM 4)</scope>
    <scope>TISSUE SPECIFICITY</scope>
    <source>
        <tissue>Prostate</tissue>
    </source>
</reference>
<reference key="8">
    <citation type="journal article" date="1999" name="Biochem. J.">
        <title>Truncated isoforms inhibit [3H]prazosin binding and cellular trafficking of native human alpha1A-adrenoceptors.</title>
        <authorList>
            <person name="Coge F."/>
            <person name="Guenin S.P."/>
            <person name="Renouard-Try A."/>
            <person name="Rique H."/>
            <person name="Ouvry C."/>
            <person name="Fabry N."/>
            <person name="Beauverger P."/>
            <person name="Nicolas J.P."/>
            <person name="Galizzi J.-P."/>
            <person name="Boutin J.A."/>
            <person name="Canet E."/>
        </authorList>
    </citation>
    <scope>NUCLEOTIDE SEQUENCE [MRNA] (ISOFORMS 5; 6; 7; 8 AND 9)</scope>
    <source>
        <tissue>Liver</tissue>
    </source>
</reference>
<reference key="9">
    <citation type="submission" date="2001-06" db="EMBL/GenBank/DDBJ databases">
        <title>RT-PCR cloning and sequence analysis of adrenergic receptor subtype-alpha-1a cDNA from human prostrate cell-line DU-145.</title>
        <authorList>
            <person name="Banerjee A.G.N."/>
            <person name="Aarti A."/>
        </authorList>
    </citation>
    <scope>NUCLEOTIDE SEQUENCE [MRNA] (ISOFORM 1)</scope>
</reference>
<reference key="10">
    <citation type="submission" date="2001-07" db="EMBL/GenBank/DDBJ databases">
        <title>Genome-wide discovery and analysis of human seven transmembrane helix receptor genes.</title>
        <authorList>
            <person name="Suwa M."/>
            <person name="Sato T."/>
            <person name="Okouchi I."/>
            <person name="Arita M."/>
            <person name="Futami K."/>
            <person name="Matsumoto S."/>
            <person name="Tsutsumi S."/>
            <person name="Aburatani H."/>
            <person name="Asai K."/>
            <person name="Akiyama Y."/>
        </authorList>
    </citation>
    <scope>NUCLEOTIDE SEQUENCE [GENOMIC DNA]</scope>
</reference>
<reference key="11">
    <citation type="submission" date="2003-09" db="EMBL/GenBank/DDBJ databases">
        <title>cDNA clones of human proteins involved in signal transduction sequenced by the Guthrie cDNA resource center (www.cdna.org).</title>
        <authorList>
            <person name="Kopatz S.A."/>
            <person name="Aronstam R.S."/>
            <person name="Sharma S.V."/>
        </authorList>
    </citation>
    <scope>NUCLEOTIDE SEQUENCE [LARGE SCALE MRNA] (ISOFORM 1)</scope>
</reference>
<reference key="12">
    <citation type="journal article" date="2004" name="Nat. Genet.">
        <title>Complete sequencing and characterization of 21,243 full-length human cDNAs.</title>
        <authorList>
            <person name="Ota T."/>
            <person name="Suzuki Y."/>
            <person name="Nishikawa T."/>
            <person name="Otsuki T."/>
            <person name="Sugiyama T."/>
            <person name="Irie R."/>
            <person name="Wakamatsu A."/>
            <person name="Hayashi K."/>
            <person name="Sato H."/>
            <person name="Nagai K."/>
            <person name="Kimura K."/>
            <person name="Makita H."/>
            <person name="Sekine M."/>
            <person name="Obayashi M."/>
            <person name="Nishi T."/>
            <person name="Shibahara T."/>
            <person name="Tanaka T."/>
            <person name="Ishii S."/>
            <person name="Yamamoto J."/>
            <person name="Saito K."/>
            <person name="Kawai Y."/>
            <person name="Isono Y."/>
            <person name="Nakamura Y."/>
            <person name="Nagahari K."/>
            <person name="Murakami K."/>
            <person name="Yasuda T."/>
            <person name="Iwayanagi T."/>
            <person name="Wagatsuma M."/>
            <person name="Shiratori A."/>
            <person name="Sudo H."/>
            <person name="Hosoiri T."/>
            <person name="Kaku Y."/>
            <person name="Kodaira H."/>
            <person name="Kondo H."/>
            <person name="Sugawara M."/>
            <person name="Takahashi M."/>
            <person name="Kanda K."/>
            <person name="Yokoi T."/>
            <person name="Furuya T."/>
            <person name="Kikkawa E."/>
            <person name="Omura Y."/>
            <person name="Abe K."/>
            <person name="Kamihara K."/>
            <person name="Katsuta N."/>
            <person name="Sato K."/>
            <person name="Tanikawa M."/>
            <person name="Yamazaki M."/>
            <person name="Ninomiya K."/>
            <person name="Ishibashi T."/>
            <person name="Yamashita H."/>
            <person name="Murakawa K."/>
            <person name="Fujimori K."/>
            <person name="Tanai H."/>
            <person name="Kimata M."/>
            <person name="Watanabe M."/>
            <person name="Hiraoka S."/>
            <person name="Chiba Y."/>
            <person name="Ishida S."/>
            <person name="Ono Y."/>
            <person name="Takiguchi S."/>
            <person name="Watanabe S."/>
            <person name="Yosida M."/>
            <person name="Hotuta T."/>
            <person name="Kusano J."/>
            <person name="Kanehori K."/>
            <person name="Takahashi-Fujii A."/>
            <person name="Hara H."/>
            <person name="Tanase T.-O."/>
            <person name="Nomura Y."/>
            <person name="Togiya S."/>
            <person name="Komai F."/>
            <person name="Hara R."/>
            <person name="Takeuchi K."/>
            <person name="Arita M."/>
            <person name="Imose N."/>
            <person name="Musashino K."/>
            <person name="Yuuki H."/>
            <person name="Oshima A."/>
            <person name="Sasaki N."/>
            <person name="Aotsuka S."/>
            <person name="Yoshikawa Y."/>
            <person name="Matsunawa H."/>
            <person name="Ichihara T."/>
            <person name="Shiohata N."/>
            <person name="Sano S."/>
            <person name="Moriya S."/>
            <person name="Momiyama H."/>
            <person name="Satoh N."/>
            <person name="Takami S."/>
            <person name="Terashima Y."/>
            <person name="Suzuki O."/>
            <person name="Nakagawa S."/>
            <person name="Senoh A."/>
            <person name="Mizoguchi H."/>
            <person name="Goto Y."/>
            <person name="Shimizu F."/>
            <person name="Wakebe H."/>
            <person name="Hishigaki H."/>
            <person name="Watanabe T."/>
            <person name="Sugiyama A."/>
            <person name="Takemoto M."/>
            <person name="Kawakami B."/>
            <person name="Yamazaki M."/>
            <person name="Watanabe K."/>
            <person name="Kumagai A."/>
            <person name="Itakura S."/>
            <person name="Fukuzumi Y."/>
            <person name="Fujimori Y."/>
            <person name="Komiyama M."/>
            <person name="Tashiro H."/>
            <person name="Tanigami A."/>
            <person name="Fujiwara T."/>
            <person name="Ono T."/>
            <person name="Yamada K."/>
            <person name="Fujii Y."/>
            <person name="Ozaki K."/>
            <person name="Hirao M."/>
            <person name="Ohmori Y."/>
            <person name="Kawabata A."/>
            <person name="Hikiji T."/>
            <person name="Kobatake N."/>
            <person name="Inagaki H."/>
            <person name="Ikema Y."/>
            <person name="Okamoto S."/>
            <person name="Okitani R."/>
            <person name="Kawakami T."/>
            <person name="Noguchi S."/>
            <person name="Itoh T."/>
            <person name="Shigeta K."/>
            <person name="Senba T."/>
            <person name="Matsumura K."/>
            <person name="Nakajima Y."/>
            <person name="Mizuno T."/>
            <person name="Morinaga M."/>
            <person name="Sasaki M."/>
            <person name="Togashi T."/>
            <person name="Oyama M."/>
            <person name="Hata H."/>
            <person name="Watanabe M."/>
            <person name="Komatsu T."/>
            <person name="Mizushima-Sugano J."/>
            <person name="Satoh T."/>
            <person name="Shirai Y."/>
            <person name="Takahashi Y."/>
            <person name="Nakagawa K."/>
            <person name="Okumura K."/>
            <person name="Nagase T."/>
            <person name="Nomura N."/>
            <person name="Kikuchi H."/>
            <person name="Masuho Y."/>
            <person name="Yamashita R."/>
            <person name="Nakai K."/>
            <person name="Yada T."/>
            <person name="Nakamura Y."/>
            <person name="Ohara O."/>
            <person name="Isogai T."/>
            <person name="Sugano S."/>
        </authorList>
    </citation>
    <scope>NUCLEOTIDE SEQUENCE [LARGE SCALE MRNA] (ISOFORM 1)</scope>
    <source>
        <tissue>Cerebellum</tissue>
    </source>
</reference>
<reference key="13">
    <citation type="submission" date="2007-12" db="EMBL/GenBank/DDBJ databases">
        <authorList>
            <consortium name="NHLBI resequencing and genotyping service (RS&amp;G)"/>
        </authorList>
    </citation>
    <scope>NUCLEOTIDE SEQUENCE [GENOMIC DNA]</scope>
</reference>
<reference key="14">
    <citation type="journal article" date="2004" name="Genome Res.">
        <title>The status, quality, and expansion of the NIH full-length cDNA project: the Mammalian Gene Collection (MGC).</title>
        <authorList>
            <consortium name="The MGC Project Team"/>
        </authorList>
    </citation>
    <scope>NUCLEOTIDE SEQUENCE [LARGE SCALE MRNA] (ISOFORM 1)</scope>
    <scope>VARIANT ARG-347</scope>
</reference>
<reference key="15">
    <citation type="journal article" date="1994" name="Life Sci.">
        <title>Identification of alpha 1-adrenoceptor subtypes present in the human prostate.</title>
        <authorList>
            <person name="Faure C."/>
            <person name="Pimoule C."/>
            <person name="Vallancien G."/>
            <person name="Langer S.Z."/>
            <person name="Graham D."/>
        </authorList>
    </citation>
    <scope>NUCLEOTIDE SEQUENCE [MRNA] OF 52-400 (ISOFORMS 1/2/3/4)</scope>
    <scope>TISSUE SPECIFICITY</scope>
    <scope>VARIANT ARG-347</scope>
    <source>
        <tissue>Prostate</tissue>
    </source>
</reference>
<reference key="16">
    <citation type="journal article" date="2008" name="Circ. Res.">
        <title>Nuclear alpha1-adrenergic receptors signal activated ERK localization to caveolae in adult cardiac myocytes.</title>
        <authorList>
            <person name="Wright C.D."/>
            <person name="Chen Q."/>
            <person name="Baye N.L."/>
            <person name="Huang Y."/>
            <person name="Healy C.L."/>
            <person name="Kasinathan S."/>
            <person name="O'Connell T.D."/>
        </authorList>
    </citation>
    <scope>SUBCELLULAR LOCATION</scope>
    <scope>FUNCTION</scope>
</reference>
<reference key="17">
    <citation type="journal article" date="2012" name="Cell. Signal.">
        <title>Nuclear localization drives alpha1-adrenergic receptor oligomerization and signaling in cardiac myocytes.</title>
        <authorList>
            <person name="Wright C.D."/>
            <person name="Wu S.C."/>
            <person name="Dahl E.F."/>
            <person name="Sazama A.J."/>
            <person name="O'Connell T.D."/>
        </authorList>
    </citation>
    <scope>SUBCELLULAR LOCATION</scope>
    <scope>SUBUNIT</scope>
    <scope>FUNCTION</scope>
    <scope>MUTAGENESIS OF LYS-334; LYS-335; ARG-342; ARG-348 AND LYS-349</scope>
</reference>
<reference key="18">
    <citation type="journal article" date="2014" name="Proc. Natl. Acad. Sci. U.S.A.">
        <title>MURC/Cavin-4 facilitates recruitment of ERK to caveolae and concentric cardiac hypertrophy induced by alpha1-adrenergic receptors.</title>
        <authorList>
            <person name="Ogata T."/>
            <person name="Naito D."/>
            <person name="Nakanishi N."/>
            <person name="Hayashi Y.K."/>
            <person name="Taniguchi T."/>
            <person name="Miyagawa K."/>
            <person name="Hamaoka T."/>
            <person name="Maruyama N."/>
            <person name="Matoba S."/>
            <person name="Ikeda K."/>
            <person name="Yamada H."/>
            <person name="Oh H."/>
            <person name="Ueyama T."/>
        </authorList>
    </citation>
    <scope>INTERACTION WITH CAVIN4</scope>
    <scope>SUBCELLULAR LOCATION</scope>
</reference>
<reference key="19">
    <citation type="journal article" date="1996" name="Br. J. Pharmacol.">
        <title>Alpha 1a-adrenoceptor polymorphism: pharmacological characterization and association with benign prostatic hypertrophy.</title>
        <authorList>
            <person name="Shibata K."/>
            <person name="Hirasawa A."/>
            <person name="Moriyama N."/>
            <person name="Kawabe K."/>
            <person name="Ogawa S."/>
            <person name="Tsujimoto G."/>
        </authorList>
    </citation>
    <scope>VARIANT ARG-347</scope>
</reference>
<reference key="20">
    <citation type="journal article" date="2004" name="Clin. Pharmacol. Ther.">
        <title>Alpha 1A-adrenergic receptor polymorphism and vascular response.</title>
        <authorList>
            <person name="Sofowora G.G."/>
            <person name="Dishy V."/>
            <person name="Landau R."/>
            <person name="Xie H.G."/>
            <person name="Prasad H.C."/>
            <person name="Byrne D.W."/>
            <person name="Smiley R.M."/>
            <person name="Kim R.B."/>
            <person name="Wood A.J."/>
            <person name="Stein C.M."/>
        </authorList>
    </citation>
    <scope>VARIANT ARG-347</scope>
</reference>
<reference key="21">
    <citation type="journal article" date="2006" name="Science">
        <title>The consensus coding sequences of human breast and colorectal cancers.</title>
        <authorList>
            <person name="Sjoeblom T."/>
            <person name="Jones S."/>
            <person name="Wood L.D."/>
            <person name="Parsons D.W."/>
            <person name="Lin J."/>
            <person name="Barber T.D."/>
            <person name="Mandelker D."/>
            <person name="Leary R.J."/>
            <person name="Ptak J."/>
            <person name="Silliman N."/>
            <person name="Szabo S."/>
            <person name="Buckhaults P."/>
            <person name="Farrell C."/>
            <person name="Meeh P."/>
            <person name="Markowitz S.D."/>
            <person name="Willis J."/>
            <person name="Dawson D."/>
            <person name="Willson J.K.V."/>
            <person name="Gazdar A.F."/>
            <person name="Hartigan J."/>
            <person name="Wu L."/>
            <person name="Liu C."/>
            <person name="Parmigiani G."/>
            <person name="Park B.H."/>
            <person name="Bachman K.E."/>
            <person name="Papadopoulos N."/>
            <person name="Vogelstein B."/>
            <person name="Kinzler K.W."/>
            <person name="Velculescu V.E."/>
        </authorList>
    </citation>
    <scope>VARIANT [LARGE SCALE ANALYSIS] TRP-40</scope>
</reference>
<comment type="function">
    <text evidence="7 8">This alpha-adrenergic receptor mediates its action by association with G proteins that activate a phosphatidylinositol-calcium second messenger system. Its effect is mediated by G(q) and G(11) proteins. Nuclear ADRA1A-ADRA1B heterooligomers regulate phenylephrine(PE)-stimulated ERK signaling in cardiac myocytes.</text>
</comment>
<comment type="subunit">
    <text evidence="8 9">Homo- and heterooligomer. Heterooligomerizes with ADRA1B homooligomers in cardiac myocytes (PubMed:22120526). Interacts with CAVIN4 (PubMed:24567387).</text>
</comment>
<comment type="interaction">
    <interactant intactId="EBI-21288891">
        <id>P35348-1</id>
    </interactant>
    <interactant intactId="EBI-713009">
        <id>Q96HD1</id>
        <label>CRELD1</label>
    </interactant>
    <organismsDiffer>false</organismsDiffer>
    <experiments>3</experiments>
</comment>
<comment type="subcellular location">
    <subcellularLocation>
        <location>Nucleus membrane</location>
        <topology>Multi-pass membrane protein</topology>
    </subcellularLocation>
    <subcellularLocation>
        <location evidence="9">Cell membrane</location>
        <topology evidence="2">Multi-pass membrane protein</topology>
    </subcellularLocation>
    <subcellularLocation>
        <location evidence="9">Cytoplasm</location>
    </subcellularLocation>
    <subcellularLocation>
        <location evidence="9">Membrane</location>
        <location evidence="9">Caveola</location>
    </subcellularLocation>
    <text>Location at the nuclear membrane facilitates heterooligomerization and regulates ERK-mediated signaling in cardiac myocytes. Colocalizes with GNAQ, PLCB1 as well as LAP2 at the nuclear membrane of cardiac myocytes.</text>
</comment>
<comment type="alternative products">
    <event type="alternative splicing"/>
    <isoform>
        <id>P35348-1</id>
        <name>1</name>
        <name>Alpha 1c-1</name>
        <name>Alpha(1A-1)</name>
        <sequence type="displayed"/>
    </isoform>
    <isoform>
        <id>P35348-2</id>
        <name>2</name>
        <name>Alpha 1c-2</name>
        <name>Alpha(1A-2)</name>
        <sequence type="described" ref="VSP_011055"/>
    </isoform>
    <isoform>
        <id>P35348-3</id>
        <name>3</name>
        <name>Alpha 1c-3</name>
        <name>Alpha(1A-3)</name>
        <sequence type="described" ref="VSP_011044 VSP_011045"/>
    </isoform>
    <isoform>
        <id>P35348-4</id>
        <name>4</name>
        <name>Alpha(1A-4)</name>
        <sequence type="described" ref="VSP_011050"/>
    </isoform>
    <isoform>
        <id>P35348-5</id>
        <name>5</name>
        <sequence type="described" ref="VSP_011051 VSP_011052"/>
    </isoform>
    <isoform>
        <id>P35348-6</id>
        <name>6</name>
        <sequence type="described" ref="VSP_011053 VSP_011054"/>
    </isoform>
    <isoform>
        <id>P35348-7</id>
        <name>7</name>
        <name>2b/3b</name>
        <sequence type="described" ref="VSP_011047 VSP_011048"/>
    </isoform>
    <isoform>
        <id>P35348-8</id>
        <name>8</name>
        <name>2c</name>
        <sequence type="described" ref="VSP_011046"/>
    </isoform>
    <isoform>
        <id>P35348-9</id>
        <name>9</name>
        <name>3c</name>
        <sequence type="described" ref="VSP_011049"/>
    </isoform>
</comment>
<comment type="tissue specificity">
    <text evidence="10 13 17">Expressed in heart, brain, liver and prostate, but not in kidney, lung, adrenal, aorta and pituitary. Within the prostate, expressed in the apex, base, periurethral and lateral lobe. Isoform 4 is the most abundant isoform expressed in the prostate with high levels also detected in liver and heart.</text>
</comment>
<comment type="PTM">
    <text evidence="1">C-terminal Ser or Thr residues may be phosphorylated.</text>
</comment>
<comment type="miscellaneous">
    <molecule>Isoform 7</molecule>
    <text evidence="21">May be produced at very low levels due to a premature stop codon in the mRNA, leading to nonsense-mediated mRNA decay.</text>
</comment>
<comment type="similarity">
    <text evidence="3">Belongs to the G-protein coupled receptor 1 family. Adrenergic receptor subfamily. ADRA1A sub-subfamily.</text>
</comment>
<comment type="sequence caution" evidence="21">
    <molecule>Isoform 2</molecule>
    <conflict type="erroneous gene model prediction">
        <sequence resource="EMBL-CDS" id="ACA05900"/>
    </conflict>
</comment>
<comment type="sequence caution" evidence="21">
    <molecule>Isoform 2</molecule>
    <conflict type="frameshift">
        <sequence resource="EMBL-CDS" id="BAA06901"/>
    </conflict>
</comment>
<evidence type="ECO:0000250" key="1"/>
<evidence type="ECO:0000255" key="2"/>
<evidence type="ECO:0000255" key="3">
    <source>
        <dbReference type="PROSITE-ProRule" id="PRU00521"/>
    </source>
</evidence>
<evidence type="ECO:0000269" key="4">
    <source>
    </source>
</evidence>
<evidence type="ECO:0000269" key="5">
    <source>
    </source>
</evidence>
<evidence type="ECO:0000269" key="6">
    <source>
    </source>
</evidence>
<evidence type="ECO:0000269" key="7">
    <source>
    </source>
</evidence>
<evidence type="ECO:0000269" key="8">
    <source>
    </source>
</evidence>
<evidence type="ECO:0000269" key="9">
    <source>
    </source>
</evidence>
<evidence type="ECO:0000269" key="10">
    <source>
    </source>
</evidence>
<evidence type="ECO:0000269" key="11">
    <source>
    </source>
</evidence>
<evidence type="ECO:0000269" key="12">
    <source>
    </source>
</evidence>
<evidence type="ECO:0000269" key="13">
    <source>
    </source>
</evidence>
<evidence type="ECO:0000269" key="14">
    <source>
    </source>
</evidence>
<evidence type="ECO:0000269" key="15">
    <source>
    </source>
</evidence>
<evidence type="ECO:0000269" key="16">
    <source>
    </source>
</evidence>
<evidence type="ECO:0000269" key="17">
    <source>
    </source>
</evidence>
<evidence type="ECO:0000303" key="18">
    <source>
    </source>
</evidence>
<evidence type="ECO:0000303" key="19">
    <source>
    </source>
</evidence>
<evidence type="ECO:0000303" key="20">
    <source>
    </source>
</evidence>
<evidence type="ECO:0000305" key="21"/>
<evidence type="ECO:0007829" key="22">
    <source>
        <dbReference type="PDB" id="7YM8"/>
    </source>
</evidence>
<evidence type="ECO:0007829" key="23">
    <source>
        <dbReference type="PDB" id="8HN1"/>
    </source>
</evidence>
<evidence type="ECO:0007829" key="24">
    <source>
        <dbReference type="PDB" id="8THK"/>
    </source>
</evidence>
<protein>
    <recommendedName>
        <fullName>Alpha-1A adrenergic receptor</fullName>
    </recommendedName>
    <alternativeName>
        <fullName>Alpha-1A adrenoreceptor</fullName>
        <shortName>Alpha-1A adrenoceptor</shortName>
    </alternativeName>
    <alternativeName>
        <fullName>Alpha-1C adrenergic receptor</fullName>
    </alternativeName>
    <alternativeName>
        <fullName>Alpha-adrenergic receptor 1c</fullName>
    </alternativeName>
</protein>
<proteinExistence type="evidence at protein level"/>
<sequence length="466" mass="51487">MVFLSGNASDSSNCTQPPAPVNISKAILLGVILGGLILFGVLGNILVILSVACHRHLHSVTHYYIVNLAVADLLLTSTVLPFSAIFEVLGYWAFGRVFCNIWAAVDVLCCTASIMGLCIISIDRYIGVSYPLRYPTIVTQRRGLMALLCVWALSLVISIGPLFGWRQPAPEDETICQINEEPGYVLFSALGSFYLPLAIILVMYCRVYVVAKRESRGLKSGLKTDKSDSEQVTLRIHRKNAPAGGSGMASAKTKTHFSVRLLKFSREKKAAKTLGIVVGCFVLCWLPFFLVMPIGSFFPDFKPSETVFKIVFWLGYLNSCINPIIYPCSSQEFKKAFQNVLRIQCLCRKQSSKHALGYTLHPPSQAVEGQHKDMVRIPVGSRETFYRISKTDGVCEWKFFSSMPRGSARITVSKDQSSCTTARVRSKSFLQVCCCVGPSTPSLDKNHQVPTIKVHTISLSENGEEV</sequence>
<dbReference type="EMBL" id="D25235">
    <property type="protein sequence ID" value="BAA04960.1"/>
    <property type="molecule type" value="mRNA"/>
</dbReference>
<dbReference type="EMBL" id="U03866">
    <property type="protein sequence ID" value="AAB60353.1"/>
    <property type="molecule type" value="Genomic_DNA"/>
</dbReference>
<dbReference type="EMBL" id="U02569">
    <property type="protein sequence ID" value="AAA93114.1"/>
    <property type="molecule type" value="mRNA"/>
</dbReference>
<dbReference type="EMBL" id="D32201">
    <property type="protein sequence ID" value="BAA06900.1"/>
    <property type="molecule type" value="mRNA"/>
</dbReference>
<dbReference type="EMBL" id="D32202">
    <property type="protein sequence ID" value="BAA06901.1"/>
    <property type="status" value="ALT_FRAME"/>
    <property type="molecule type" value="mRNA"/>
</dbReference>
<dbReference type="EMBL" id="L31774">
    <property type="protein sequence ID" value="AAB59486.1"/>
    <property type="molecule type" value="mRNA"/>
</dbReference>
<dbReference type="EMBL" id="AF013261">
    <property type="protein sequence ID" value="AAC06138.1"/>
    <property type="molecule type" value="mRNA"/>
</dbReference>
<dbReference type="EMBL" id="AY491775">
    <property type="protein sequence ID" value="AAR84644.1"/>
    <property type="molecule type" value="mRNA"/>
</dbReference>
<dbReference type="EMBL" id="AY491776">
    <property type="protein sequence ID" value="AAR84645.1"/>
    <property type="molecule type" value="mRNA"/>
</dbReference>
<dbReference type="EMBL" id="AY491777">
    <property type="protein sequence ID" value="AAR84646.1"/>
    <property type="molecule type" value="mRNA"/>
</dbReference>
<dbReference type="EMBL" id="AY491778">
    <property type="protein sequence ID" value="AAR84647.1"/>
    <property type="molecule type" value="mRNA"/>
</dbReference>
<dbReference type="EMBL" id="AY491779">
    <property type="protein sequence ID" value="AAR84648.1"/>
    <property type="molecule type" value="mRNA"/>
</dbReference>
<dbReference type="EMBL" id="AY491780">
    <property type="protein sequence ID" value="AAR84649.1"/>
    <property type="molecule type" value="mRNA"/>
</dbReference>
<dbReference type="EMBL" id="AY491781">
    <property type="protein sequence ID" value="AAR84650.1"/>
    <property type="molecule type" value="mRNA"/>
</dbReference>
<dbReference type="EMBL" id="AF395806">
    <property type="protein sequence ID" value="AAK77197.1"/>
    <property type="molecule type" value="mRNA"/>
</dbReference>
<dbReference type="EMBL" id="AB065703">
    <property type="protein sequence ID" value="BAC05926.1"/>
    <property type="molecule type" value="Genomic_DNA"/>
</dbReference>
<dbReference type="EMBL" id="AY389505">
    <property type="protein sequence ID" value="AAQ91331.1"/>
    <property type="molecule type" value="Genomic_DNA"/>
</dbReference>
<dbReference type="EMBL" id="AK289548">
    <property type="protein sequence ID" value="BAF82237.1"/>
    <property type="molecule type" value="mRNA"/>
</dbReference>
<dbReference type="EMBL" id="EU326301">
    <property type="protein sequence ID" value="ACA05899.1"/>
    <property type="molecule type" value="Genomic_DNA"/>
</dbReference>
<dbReference type="EMBL" id="EU326301">
    <property type="protein sequence ID" value="ACA05900.1"/>
    <property type="status" value="ALT_SEQ"/>
    <property type="molecule type" value="Genomic_DNA"/>
</dbReference>
<dbReference type="EMBL" id="EU326301">
    <property type="protein sequence ID" value="ACA05902.1"/>
    <property type="molecule type" value="Genomic_DNA"/>
</dbReference>
<dbReference type="EMBL" id="EU326301">
    <property type="protein sequence ID" value="ACA05903.1"/>
    <property type="molecule type" value="Genomic_DNA"/>
</dbReference>
<dbReference type="EMBL" id="EU326301">
    <property type="protein sequence ID" value="ACA05904.1"/>
    <property type="molecule type" value="Genomic_DNA"/>
</dbReference>
<dbReference type="EMBL" id="EU326301">
    <property type="protein sequence ID" value="ACA05905.1"/>
    <property type="molecule type" value="Genomic_DNA"/>
</dbReference>
<dbReference type="EMBL" id="EU326301">
    <property type="protein sequence ID" value="ACA05906.1"/>
    <property type="molecule type" value="Genomic_DNA"/>
</dbReference>
<dbReference type="EMBL" id="EU326301">
    <property type="protein sequence ID" value="ACA05907.1"/>
    <property type="molecule type" value="Genomic_DNA"/>
</dbReference>
<dbReference type="EMBL" id="BC095512">
    <property type="protein sequence ID" value="AAH95512.1"/>
    <property type="molecule type" value="mRNA"/>
</dbReference>
<dbReference type="CCDS" id="CCDS34869.1">
    <molecule id="P35348-2"/>
</dbReference>
<dbReference type="CCDS" id="CCDS6052.1">
    <molecule id="P35348-3"/>
</dbReference>
<dbReference type="CCDS" id="CCDS6053.1">
    <molecule id="P35348-4"/>
</dbReference>
<dbReference type="CCDS" id="CCDS6054.1">
    <molecule id="P35348-1"/>
</dbReference>
<dbReference type="CCDS" id="CCDS83269.1">
    <molecule id="P35348-6"/>
</dbReference>
<dbReference type="PIR" id="JN0765">
    <property type="entry name" value="JN0765"/>
</dbReference>
<dbReference type="PIR" id="S65656">
    <property type="entry name" value="S65656"/>
</dbReference>
<dbReference type="PIR" id="S65657">
    <property type="entry name" value="S65657"/>
</dbReference>
<dbReference type="RefSeq" id="NP_000671.2">
    <molecule id="P35348-1"/>
    <property type="nucleotide sequence ID" value="NM_000680.4"/>
</dbReference>
<dbReference type="RefSeq" id="NP_001309431.1">
    <molecule id="P35348-9"/>
    <property type="nucleotide sequence ID" value="NM_001322502.1"/>
</dbReference>
<dbReference type="RefSeq" id="NP_001309432.1">
    <molecule id="P35348-8"/>
    <property type="nucleotide sequence ID" value="NM_001322503.1"/>
</dbReference>
<dbReference type="RefSeq" id="NP_001309433.1">
    <molecule id="P35348-6"/>
    <property type="nucleotide sequence ID" value="NM_001322504.1"/>
</dbReference>
<dbReference type="RefSeq" id="NP_150645.2">
    <molecule id="P35348-3"/>
    <property type="nucleotide sequence ID" value="NM_033302.3"/>
</dbReference>
<dbReference type="RefSeq" id="NP_150646.3">
    <molecule id="P35348-2"/>
    <property type="nucleotide sequence ID" value="NM_033303.4"/>
</dbReference>
<dbReference type="RefSeq" id="NP_150647.2">
    <molecule id="P35348-4"/>
    <property type="nucleotide sequence ID" value="NM_033304.3"/>
</dbReference>
<dbReference type="RefSeq" id="XP_006716356.1">
    <molecule id="P35348-3"/>
    <property type="nucleotide sequence ID" value="XM_006716293.5"/>
</dbReference>
<dbReference type="RefSeq" id="XP_011542713.1">
    <property type="nucleotide sequence ID" value="XM_011544411.2"/>
</dbReference>
<dbReference type="RefSeq" id="XP_016868583.1">
    <molecule id="P35348-2"/>
    <property type="nucleotide sequence ID" value="XM_017013094.2"/>
</dbReference>
<dbReference type="RefSeq" id="XP_016868584.1">
    <molecule id="P35348-2"/>
    <property type="nucleotide sequence ID" value="XM_017013095.2"/>
</dbReference>
<dbReference type="PDB" id="7YM8">
    <property type="method" value="EM"/>
    <property type="resolution" value="2.92 A"/>
    <property type="chains" value="A=1-227, A=262-371"/>
</dbReference>
<dbReference type="PDB" id="7YMH">
    <property type="method" value="EM"/>
    <property type="resolution" value="3.52 A"/>
    <property type="chains" value="A=1-227, A=262-371"/>
</dbReference>
<dbReference type="PDB" id="7YMJ">
    <property type="method" value="EM"/>
    <property type="resolution" value="3.35 A"/>
    <property type="chains" value="A=1-234, A=276-371"/>
</dbReference>
<dbReference type="PDB" id="8HN1">
    <property type="method" value="EM"/>
    <property type="resolution" value="2.90 A"/>
    <property type="chains" value="A=1-371"/>
</dbReference>
<dbReference type="PDB" id="8THK">
    <property type="method" value="EM"/>
    <property type="resolution" value="2.60 A"/>
    <property type="chains" value="R=15-350"/>
</dbReference>
<dbReference type="PDB" id="8THL">
    <property type="method" value="EM"/>
    <property type="resolution" value="3.10 A"/>
    <property type="chains" value="R=15-350"/>
</dbReference>
<dbReference type="PDBsum" id="7YM8"/>
<dbReference type="PDBsum" id="7YMH"/>
<dbReference type="PDBsum" id="7YMJ"/>
<dbReference type="PDBsum" id="8HN1"/>
<dbReference type="PDBsum" id="8THK"/>
<dbReference type="PDBsum" id="8THL"/>
<dbReference type="EMDB" id="EMD-33924"/>
<dbReference type="EMDB" id="EMD-33928"/>
<dbReference type="EMDB" id="EMD-33930"/>
<dbReference type="EMDB" id="EMD-34906"/>
<dbReference type="EMDB" id="EMD-41267"/>
<dbReference type="EMDB" id="EMD-41268"/>
<dbReference type="SMR" id="P35348"/>
<dbReference type="BioGRID" id="106658">
    <property type="interactions" value="28"/>
</dbReference>
<dbReference type="CORUM" id="P35348"/>
<dbReference type="DIP" id="DIP-33401N"/>
<dbReference type="FunCoup" id="P35348">
    <property type="interactions" value="2841"/>
</dbReference>
<dbReference type="IntAct" id="P35348">
    <property type="interactions" value="33"/>
</dbReference>
<dbReference type="MINT" id="P35348"/>
<dbReference type="STRING" id="9606.ENSP00000369960"/>
<dbReference type="BindingDB" id="P35348"/>
<dbReference type="ChEMBL" id="CHEMBL229"/>
<dbReference type="DrugBank" id="DB01472">
    <property type="generic name" value="4-Methoxyamphetamine"/>
</dbReference>
<dbReference type="DrugBank" id="DB01614">
    <property type="generic name" value="Acepromazine"/>
</dbReference>
<dbReference type="DrugBank" id="DB00346">
    <property type="generic name" value="Alfuzosin"/>
</dbReference>
<dbReference type="DrugBank" id="DB00321">
    <property type="generic name" value="Amitriptyline"/>
</dbReference>
<dbReference type="DrugBank" id="DB00543">
    <property type="generic name" value="Amoxapine"/>
</dbReference>
<dbReference type="DrugBank" id="DB00182">
    <property type="generic name" value="Amphetamine"/>
</dbReference>
<dbReference type="DrugBank" id="DB00964">
    <property type="generic name" value="Apraclonidine"/>
</dbReference>
<dbReference type="DrugBank" id="DB09229">
    <property type="generic name" value="Aranidipine"/>
</dbReference>
<dbReference type="DrugBank" id="DB01238">
    <property type="generic name" value="Aripiprazole"/>
</dbReference>
<dbReference type="DrugBank" id="DB14185">
    <property type="generic name" value="Aripiprazole lauroxil"/>
</dbReference>
<dbReference type="DrugBank" id="DB09204">
    <property type="generic name" value="Arotinolol"/>
</dbReference>
<dbReference type="DrugBank" id="DB06216">
    <property type="generic name" value="Asenapine"/>
</dbReference>
<dbReference type="DrugBank" id="DB00865">
    <property type="generic name" value="Benzphetamine"/>
</dbReference>
<dbReference type="DrugBank" id="DB01295">
    <property type="generic name" value="Bevantolol"/>
</dbReference>
<dbReference type="DrugBank" id="DB09128">
    <property type="generic name" value="Brexpiprazole"/>
</dbReference>
<dbReference type="DrugBank" id="DB01200">
    <property type="generic name" value="Bromocriptine"/>
</dbReference>
<dbReference type="DrugBank" id="DB00490">
    <property type="generic name" value="Buspirone"/>
</dbReference>
<dbReference type="DrugBank" id="DB00248">
    <property type="generic name" value="Cabergoline"/>
</dbReference>
<dbReference type="DrugBank" id="DB06016">
    <property type="generic name" value="Cariprazine"/>
</dbReference>
<dbReference type="DrugBank" id="DB01136">
    <property type="generic name" value="Carvedilol"/>
</dbReference>
<dbReference type="DrugBank" id="DB00477">
    <property type="generic name" value="Chlorpromazine"/>
</dbReference>
<dbReference type="DrugBank" id="DB09202">
    <property type="generic name" value="Cirazoline"/>
</dbReference>
<dbReference type="DrugBank" id="DB00575">
    <property type="generic name" value="Clonidine"/>
</dbReference>
<dbReference type="DrugBank" id="DB15971">
    <property type="generic name" value="Clorotepine"/>
</dbReference>
<dbReference type="DrugBank" id="DB00363">
    <property type="generic name" value="Clozapine"/>
</dbReference>
<dbReference type="DrugBank" id="DB00298">
    <property type="generic name" value="Dapiprazole"/>
</dbReference>
<dbReference type="DrugBank" id="DB01151">
    <property type="generic name" value="Desipramine"/>
</dbReference>
<dbReference type="DrugBank" id="DB01576">
    <property type="generic name" value="Dextroamphetamine"/>
</dbReference>
<dbReference type="DrugBank" id="DB11273">
    <property type="generic name" value="Dihydroergocornine"/>
</dbReference>
<dbReference type="DrugBank" id="DB13345">
    <property type="generic name" value="Dihydroergocristine"/>
</dbReference>
<dbReference type="DrugBank" id="DB00320">
    <property type="generic name" value="Dihydroergotamine"/>
</dbReference>
<dbReference type="DrugBank" id="DB00449">
    <property type="generic name" value="Dipivefrin"/>
</dbReference>
<dbReference type="DrugBank" id="DB11278">
    <property type="generic name" value="DL-Methylephedrine"/>
</dbReference>
<dbReference type="DrugBank" id="DB00841">
    <property type="generic name" value="Dobutamine"/>
</dbReference>
<dbReference type="DrugBank" id="DB09167">
    <property type="generic name" value="Dosulepin"/>
</dbReference>
<dbReference type="DrugBank" id="DB00590">
    <property type="generic name" value="Doxazosin"/>
</dbReference>
<dbReference type="DrugBank" id="DB01142">
    <property type="generic name" value="Doxepin"/>
</dbReference>
<dbReference type="DrugBank" id="DB04855">
    <property type="generic name" value="Dronedarone"/>
</dbReference>
<dbReference type="DrugBank" id="DB00450">
    <property type="generic name" value="Droperidol"/>
</dbReference>
<dbReference type="DrugBank" id="DB06262">
    <property type="generic name" value="Droxidopa"/>
</dbReference>
<dbReference type="DrugBank" id="DB01364">
    <property type="generic name" value="Ephedrine"/>
</dbReference>
<dbReference type="DrugBank" id="DB05492">
    <property type="generic name" value="Epicept NP-1"/>
</dbReference>
<dbReference type="DrugBank" id="DB00751">
    <property type="generic name" value="Epinastine"/>
</dbReference>
<dbReference type="DrugBank" id="DB00668">
    <property type="generic name" value="Epinephrine"/>
</dbReference>
<dbReference type="DrugBank" id="DB01049">
    <property type="generic name" value="Ergoloid mesylate"/>
</dbReference>
<dbReference type="DrugBank" id="DB01253">
    <property type="generic name" value="Ergometrine"/>
</dbReference>
<dbReference type="DrugBank" id="DB00696">
    <property type="generic name" value="Ergotamine"/>
</dbReference>
<dbReference type="DrugBank" id="DB01175">
    <property type="generic name" value="Escitalopram"/>
</dbReference>
<dbReference type="DrugBank" id="DB09194">
    <property type="generic name" value="Etoperidone"/>
</dbReference>
<dbReference type="DrugBank" id="DB00800">
    <property type="generic name" value="Fenoldopam"/>
</dbReference>
<dbReference type="DrugBank" id="DB13665">
    <property type="generic name" value="Fluanisone"/>
</dbReference>
<dbReference type="DrugBank" id="DB00875">
    <property type="generic name" value="Flupentixol"/>
</dbReference>
<dbReference type="DrugBank" id="DB00502">
    <property type="generic name" value="Haloperidol"/>
</dbReference>
<dbReference type="DrugBank" id="DB04946">
    <property type="generic name" value="Iloperidone"/>
</dbReference>
<dbReference type="DrugBank" id="DB00458">
    <property type="generic name" value="Imipramine"/>
</dbReference>
<dbReference type="DrugBank" id="DB11577">
    <property type="generic name" value="Indigotindisulfonic acid"/>
</dbReference>
<dbReference type="DrugBank" id="DB08950">
    <property type="generic name" value="Indoramin"/>
</dbReference>
<dbReference type="DrugBank" id="DB06706">
    <property type="generic name" value="Isometheptene"/>
</dbReference>
<dbReference type="DrugBank" id="DB00598">
    <property type="generic name" value="Labetalol"/>
</dbReference>
<dbReference type="DrugBank" id="DB00555">
    <property type="generic name" value="Lamotrigine"/>
</dbReference>
<dbReference type="DrugBank" id="DB06707">
    <property type="generic name" value="Levonordefrin"/>
</dbReference>
<dbReference type="DrugBank" id="DB04948">
    <property type="generic name" value="Lofexidine"/>
</dbReference>
<dbReference type="DrugBank" id="DB09195">
    <property type="generic name" value="Lorpiprazole"/>
</dbReference>
<dbReference type="DrugBank" id="DB00408">
    <property type="generic name" value="Loxapine"/>
</dbReference>
<dbReference type="DrugBank" id="DB00934">
    <property type="generic name" value="Maprotiline"/>
</dbReference>
<dbReference type="DrugBank" id="DB11428">
    <property type="generic name" value="Medetomidine"/>
</dbReference>
<dbReference type="DrugBank" id="DB01365">
    <property type="generic name" value="Mephentermine"/>
</dbReference>
<dbReference type="DrugBank" id="DB00610">
    <property type="generic name" value="Metaraminol"/>
</dbReference>
<dbReference type="DrugBank" id="DB01403">
    <property type="generic name" value="Methotrimeprazine"/>
</dbReference>
<dbReference type="DrugBank" id="DB00723">
    <property type="generic name" value="Methoxamine"/>
</dbReference>
<dbReference type="DrugBank" id="DB06148">
    <property type="generic name" value="Mianserin"/>
</dbReference>
<dbReference type="DrugBank" id="DB00211">
    <property type="generic name" value="Midodrine"/>
</dbReference>
<dbReference type="DrugBank" id="DB00370">
    <property type="generic name" value="Mirtazapine"/>
</dbReference>
<dbReference type="DrugBank" id="DB09205">
    <property type="generic name" value="Moxisylyte"/>
</dbReference>
<dbReference type="DrugBank" id="DB12092">
    <property type="generic name" value="Naftopidil"/>
</dbReference>
<dbReference type="DrugBank" id="DB06711">
    <property type="generic name" value="Naphazoline"/>
</dbReference>
<dbReference type="DrugBank" id="DB01149">
    <property type="generic name" value="Nefazodone"/>
</dbReference>
<dbReference type="DrugBank" id="DB00622">
    <property type="generic name" value="Nicardipine"/>
</dbReference>
<dbReference type="DrugBank" id="DB00699">
    <property type="generic name" value="Nicergoline"/>
</dbReference>
<dbReference type="DrugBank" id="DB09239">
    <property type="generic name" value="Niguldipine"/>
</dbReference>
<dbReference type="DrugBank" id="DB00368">
    <property type="generic name" value="Norepinephrine"/>
</dbReference>
<dbReference type="DrugBank" id="DB00540">
    <property type="generic name" value="Nortriptyline"/>
</dbReference>
<dbReference type="DrugBank" id="DB06229">
    <property type="generic name" value="Ocaperidone"/>
</dbReference>
<dbReference type="DrugBank" id="DB00334">
    <property type="generic name" value="Olanzapine"/>
</dbReference>
<dbReference type="DrugBank" id="DB00935">
    <property type="generic name" value="Oxymetazoline"/>
</dbReference>
<dbReference type="DrugBank" id="DB01267">
    <property type="generic name" value="Paliperidone"/>
</dbReference>
<dbReference type="DrugBank" id="DB00715">
    <property type="generic name" value="Paroxetine"/>
</dbReference>
<dbReference type="DrugBank" id="DB01186">
    <property type="generic name" value="Pergolide"/>
</dbReference>
<dbReference type="DrugBank" id="DB08922">
    <property type="generic name" value="Perospirone"/>
</dbReference>
<dbReference type="DrugBank" id="DB01579">
    <property type="generic name" value="Phendimetrazine"/>
</dbReference>
<dbReference type="DrugBank" id="DB00925">
    <property type="generic name" value="Phenoxybenzamine"/>
</dbReference>
<dbReference type="DrugBank" id="DB00692">
    <property type="generic name" value="Phentolamine"/>
</dbReference>
<dbReference type="DrugBank" id="DB00388">
    <property type="generic name" value="Phenylephrine"/>
</dbReference>
<dbReference type="DrugBank" id="DB09286">
    <property type="generic name" value="Pipamperone"/>
</dbReference>
<dbReference type="DrugBank" id="DB06153">
    <property type="generic name" value="Pizotifen"/>
</dbReference>
<dbReference type="DrugBank" id="DB00457">
    <property type="generic name" value="Prazosin"/>
</dbReference>
<dbReference type="DrugBank" id="DB00433">
    <property type="generic name" value="Prochlorperazine"/>
</dbReference>
<dbReference type="DrugBank" id="DB00420">
    <property type="generic name" value="Promazine"/>
</dbReference>
<dbReference type="DrugBank" id="DB01069">
    <property type="generic name" value="Promethazine"/>
</dbReference>
<dbReference type="DrugBank" id="DB00777">
    <property type="generic name" value="Propiomazine"/>
</dbReference>
<dbReference type="DrugBank" id="DB12278">
    <property type="generic name" value="Propiverine"/>
</dbReference>
<dbReference type="DrugBank" id="DB00852">
    <property type="generic name" value="Pseudoephedrine"/>
</dbReference>
<dbReference type="DrugBank" id="DB01224">
    <property type="generic name" value="Quetiapine"/>
</dbReference>
<dbReference type="DrugBank" id="DB00908">
    <property type="generic name" value="Quinidine"/>
</dbReference>
<dbReference type="DrugBank" id="DB05469">
    <property type="generic name" value="R450"/>
</dbReference>
<dbReference type="DrugBank" id="DB11124">
    <property type="generic name" value="Racepinephrine"/>
</dbReference>
<dbReference type="DrugBank" id="DB00243">
    <property type="generic name" value="Ranolazine"/>
</dbReference>
<dbReference type="DrugBank" id="DB00734">
    <property type="generic name" value="Risperidone"/>
</dbReference>
<dbReference type="DrugBank" id="DB00268">
    <property type="generic name" value="Ropinirole"/>
</dbReference>
<dbReference type="DrugBank" id="DB06144">
    <property type="generic name" value="Sertindole"/>
</dbReference>
<dbReference type="DrugBank" id="DB06207">
    <property type="generic name" value="Silodosin"/>
</dbReference>
<dbReference type="DrugBank" id="DB06555">
    <property type="generic name" value="Siramesine"/>
</dbReference>
<dbReference type="DrugBank" id="DB17056">
    <property type="generic name" value="Spiperone"/>
</dbReference>
<dbReference type="DrugBank" id="DB09203">
    <property type="generic name" value="Synephrine"/>
</dbReference>
<dbReference type="DrugBank" id="DB00706">
    <property type="generic name" value="Tamsulosin"/>
</dbReference>
<dbReference type="DrugBank" id="DB01162">
    <property type="generic name" value="Terazosin"/>
</dbReference>
<dbReference type="DrugBank" id="DB06764">
    <property type="generic name" value="Tetryzoline"/>
</dbReference>
<dbReference type="DrugBank" id="DB01622">
    <property type="generic name" value="Thioproperazine"/>
</dbReference>
<dbReference type="DrugBank" id="DB00679">
    <property type="generic name" value="Thioridazine"/>
</dbReference>
<dbReference type="DrugBank" id="DB13025">
    <property type="generic name" value="Tiapride"/>
</dbReference>
<dbReference type="DrugBank" id="DB00697">
    <property type="generic name" value="Tizanidine"/>
</dbReference>
<dbReference type="DrugBank" id="DB00797">
    <property type="generic name" value="Tolazoline"/>
</dbReference>
<dbReference type="DrugBank" id="DB00656">
    <property type="generic name" value="Trazodone"/>
</dbReference>
<dbReference type="DrugBank" id="DB00831">
    <property type="generic name" value="Trifluoperazine"/>
</dbReference>
<dbReference type="DrugBank" id="DB00726">
    <property type="generic name" value="Trimipramine"/>
</dbReference>
<dbReference type="DrugBank" id="DB00661">
    <property type="generic name" value="Verapamil"/>
</dbReference>
<dbReference type="DrugBank" id="DB06694">
    <property type="generic name" value="Xylometazoline"/>
</dbReference>
<dbReference type="DrugBank" id="DB00246">
    <property type="generic name" value="Ziprasidone"/>
</dbReference>
<dbReference type="DrugBank" id="DB01624">
    <property type="generic name" value="Zuclopenthixol"/>
</dbReference>
<dbReference type="DrugCentral" id="P35348"/>
<dbReference type="GuidetoPHARMACOLOGY" id="22"/>
<dbReference type="GlyCosmos" id="P35348">
    <property type="glycosylation" value="3 sites, No reported glycans"/>
</dbReference>
<dbReference type="GlyGen" id="P35348">
    <property type="glycosylation" value="4 sites, 1 O-linked glycan (1 site)"/>
</dbReference>
<dbReference type="iPTMnet" id="P35348"/>
<dbReference type="PhosphoSitePlus" id="P35348"/>
<dbReference type="BioMuta" id="ADRA1A"/>
<dbReference type="DMDM" id="1168246"/>
<dbReference type="jPOST" id="P35348"/>
<dbReference type="MassIVE" id="P35348"/>
<dbReference type="PaxDb" id="9606-ENSP00000369960"/>
<dbReference type="PeptideAtlas" id="P35348"/>
<dbReference type="ProteomicsDB" id="55030">
    <molecule id="P35348-5"/>
</dbReference>
<dbReference type="ProteomicsDB" id="55033">
    <molecule id="P35348-8"/>
</dbReference>
<dbReference type="Antibodypedia" id="10062">
    <property type="antibodies" value="373 antibodies from 38 providers"/>
</dbReference>
<dbReference type="DNASU" id="148"/>
<dbReference type="Ensembl" id="ENST00000276393.8">
    <molecule id="P35348-1"/>
    <property type="protein sequence ID" value="ENSP00000276393.4"/>
    <property type="gene ID" value="ENSG00000120907.18"/>
</dbReference>
<dbReference type="Ensembl" id="ENST00000354550.4">
    <molecule id="P35348-4"/>
    <property type="protein sequence ID" value="ENSP00000346557.4"/>
    <property type="gene ID" value="ENSG00000120907.18"/>
</dbReference>
<dbReference type="Ensembl" id="ENST00000380572.3">
    <molecule id="P35348-6"/>
    <property type="protein sequence ID" value="ENSP00000369946.3"/>
    <property type="gene ID" value="ENSG00000120907.18"/>
</dbReference>
<dbReference type="Ensembl" id="ENST00000380573.4">
    <molecule id="P35348-1"/>
    <property type="protein sequence ID" value="ENSP00000369947.3"/>
    <property type="gene ID" value="ENSG00000120907.18"/>
</dbReference>
<dbReference type="Ensembl" id="ENST00000380582.7">
    <molecule id="P35348-3"/>
    <property type="protein sequence ID" value="ENSP00000369956.3"/>
    <property type="gene ID" value="ENSG00000120907.18"/>
</dbReference>
<dbReference type="Ensembl" id="ENST00000380586.5">
    <molecule id="P35348-2"/>
    <property type="protein sequence ID" value="ENSP00000369960.1"/>
    <property type="gene ID" value="ENSG00000120907.18"/>
</dbReference>
<dbReference type="Ensembl" id="ENST00000519096.5">
    <molecule id="P35348-7"/>
    <property type="protein sequence ID" value="ENSP00000431073.1"/>
    <property type="gene ID" value="ENSG00000120907.18"/>
</dbReference>
<dbReference type="Ensembl" id="ENST00000521711.5">
    <molecule id="P35348-7"/>
    <property type="protein sequence ID" value="ENSP00000430414.1"/>
    <property type="gene ID" value="ENSG00000120907.18"/>
</dbReference>
<dbReference type="GeneID" id="148"/>
<dbReference type="KEGG" id="hsa:148"/>
<dbReference type="MANE-Select" id="ENST00000380573.4">
    <property type="protein sequence ID" value="ENSP00000369947.3"/>
    <property type="RefSeq nucleotide sequence ID" value="NM_000680.4"/>
    <property type="RefSeq protein sequence ID" value="NP_000671.2"/>
</dbReference>
<dbReference type="UCSC" id="uc003xfc.1">
    <molecule id="P35348-1"/>
    <property type="organism name" value="human"/>
</dbReference>
<dbReference type="AGR" id="HGNC:277"/>
<dbReference type="CTD" id="148"/>
<dbReference type="DisGeNET" id="148"/>
<dbReference type="GeneCards" id="ADRA1A"/>
<dbReference type="HGNC" id="HGNC:277">
    <property type="gene designation" value="ADRA1A"/>
</dbReference>
<dbReference type="HPA" id="ENSG00000120907">
    <property type="expression patterns" value="Tissue enhanced (adipose tissue, liver)"/>
</dbReference>
<dbReference type="MIM" id="104221">
    <property type="type" value="gene"/>
</dbReference>
<dbReference type="neXtProt" id="NX_P35348"/>
<dbReference type="OpenTargets" id="ENSG00000120907"/>
<dbReference type="PharmGKB" id="PA34"/>
<dbReference type="VEuPathDB" id="HostDB:ENSG00000120907"/>
<dbReference type="eggNOG" id="KOG3656">
    <property type="taxonomic scope" value="Eukaryota"/>
</dbReference>
<dbReference type="GeneTree" id="ENSGT00940000159105"/>
<dbReference type="HOGENOM" id="CLU_009579_11_6_1"/>
<dbReference type="InParanoid" id="P35348"/>
<dbReference type="OMA" id="CLLRKQP"/>
<dbReference type="OrthoDB" id="6358729at2759"/>
<dbReference type="PAN-GO" id="P35348">
    <property type="GO annotations" value="9 GO annotations based on evolutionary models"/>
</dbReference>
<dbReference type="PhylomeDB" id="P35348"/>
<dbReference type="TreeFam" id="TF331895"/>
<dbReference type="PathwayCommons" id="P35348"/>
<dbReference type="Reactome" id="R-HSA-390696">
    <property type="pathway name" value="Adrenoceptors"/>
</dbReference>
<dbReference type="Reactome" id="R-HSA-416476">
    <property type="pathway name" value="G alpha (q) signalling events"/>
</dbReference>
<dbReference type="Reactome" id="R-HSA-416482">
    <property type="pathway name" value="G alpha (12/13) signalling events"/>
</dbReference>
<dbReference type="SignaLink" id="P35348"/>
<dbReference type="SIGNOR" id="P35348"/>
<dbReference type="BioGRID-ORCS" id="148">
    <property type="hits" value="7 hits in 1158 CRISPR screens"/>
</dbReference>
<dbReference type="GeneWiki" id="Alpha-1A_adrenergic_receptor"/>
<dbReference type="GenomeRNAi" id="148"/>
<dbReference type="Pharos" id="P35348">
    <property type="development level" value="Tclin"/>
</dbReference>
<dbReference type="PRO" id="PR:P35348"/>
<dbReference type="Proteomes" id="UP000005640">
    <property type="component" value="Chromosome 8"/>
</dbReference>
<dbReference type="RNAct" id="P35348">
    <property type="molecule type" value="protein"/>
</dbReference>
<dbReference type="Bgee" id="ENSG00000120907">
    <property type="expression patterns" value="Expressed in right lobe of liver and 109 other cell types or tissues"/>
</dbReference>
<dbReference type="ExpressionAtlas" id="P35348">
    <property type="expression patterns" value="baseline and differential"/>
</dbReference>
<dbReference type="GO" id="GO:0005901">
    <property type="term" value="C:caveola"/>
    <property type="evidence" value="ECO:0007669"/>
    <property type="project" value="UniProtKB-SubCell"/>
</dbReference>
<dbReference type="GO" id="GO:0005737">
    <property type="term" value="C:cytoplasm"/>
    <property type="evidence" value="ECO:0000314"/>
    <property type="project" value="UniProtKB"/>
</dbReference>
<dbReference type="GO" id="GO:0005829">
    <property type="term" value="C:cytosol"/>
    <property type="evidence" value="ECO:0000314"/>
    <property type="project" value="HPA"/>
</dbReference>
<dbReference type="GO" id="GO:0043231">
    <property type="term" value="C:intracellular membrane-bounded organelle"/>
    <property type="evidence" value="ECO:0000314"/>
    <property type="project" value="HPA"/>
</dbReference>
<dbReference type="GO" id="GO:0031965">
    <property type="term" value="C:nuclear membrane"/>
    <property type="evidence" value="ECO:0000314"/>
    <property type="project" value="UniProtKB"/>
</dbReference>
<dbReference type="GO" id="GO:0005654">
    <property type="term" value="C:nucleoplasm"/>
    <property type="evidence" value="ECO:0000314"/>
    <property type="project" value="HPA"/>
</dbReference>
<dbReference type="GO" id="GO:0005634">
    <property type="term" value="C:nucleus"/>
    <property type="evidence" value="ECO:0000314"/>
    <property type="project" value="UniProtKB"/>
</dbReference>
<dbReference type="GO" id="GO:0005886">
    <property type="term" value="C:plasma membrane"/>
    <property type="evidence" value="ECO:0000314"/>
    <property type="project" value="UniProtKB"/>
</dbReference>
<dbReference type="GO" id="GO:0004937">
    <property type="term" value="F:alpha1-adrenergic receptor activity"/>
    <property type="evidence" value="ECO:0000318"/>
    <property type="project" value="GO_Central"/>
</dbReference>
<dbReference type="GO" id="GO:0046982">
    <property type="term" value="F:protein heterodimerization activity"/>
    <property type="evidence" value="ECO:0000314"/>
    <property type="project" value="UniProtKB"/>
</dbReference>
<dbReference type="GO" id="GO:0071880">
    <property type="term" value="P:adenylate cyclase-activating adrenergic receptor signaling pathway"/>
    <property type="evidence" value="ECO:0000318"/>
    <property type="project" value="GO_Central"/>
</dbReference>
<dbReference type="GO" id="GO:0007512">
    <property type="term" value="P:adult heart development"/>
    <property type="evidence" value="ECO:0007669"/>
    <property type="project" value="Ensembl"/>
</dbReference>
<dbReference type="GO" id="GO:0006915">
    <property type="term" value="P:apoptotic process"/>
    <property type="evidence" value="ECO:0000304"/>
    <property type="project" value="ProtInc"/>
</dbReference>
<dbReference type="GO" id="GO:0061049">
    <property type="term" value="P:cell growth involved in cardiac muscle cell development"/>
    <property type="evidence" value="ECO:0007669"/>
    <property type="project" value="Ensembl"/>
</dbReference>
<dbReference type="GO" id="GO:0007267">
    <property type="term" value="P:cell-cell signaling"/>
    <property type="evidence" value="ECO:0000318"/>
    <property type="project" value="GO_Central"/>
</dbReference>
<dbReference type="GO" id="GO:0007186">
    <property type="term" value="P:G protein-coupled receptor signaling pathway"/>
    <property type="evidence" value="ECO:0000304"/>
    <property type="project" value="ProtInc"/>
</dbReference>
<dbReference type="GO" id="GO:0035556">
    <property type="term" value="P:intracellular signal transduction"/>
    <property type="evidence" value="ECO:0000304"/>
    <property type="project" value="ProtInc"/>
</dbReference>
<dbReference type="GO" id="GO:0000165">
    <property type="term" value="P:MAPK cascade"/>
    <property type="evidence" value="ECO:0007669"/>
    <property type="project" value="Ensembl"/>
</dbReference>
<dbReference type="GO" id="GO:0010507">
    <property type="term" value="P:negative regulation of autophagy"/>
    <property type="evidence" value="ECO:0007669"/>
    <property type="project" value="Ensembl"/>
</dbReference>
<dbReference type="GO" id="GO:0008285">
    <property type="term" value="P:negative regulation of cell population proliferation"/>
    <property type="evidence" value="ECO:0000304"/>
    <property type="project" value="ProtInc"/>
</dbReference>
<dbReference type="GO" id="GO:0001985">
    <property type="term" value="P:negative regulation of heart rate involved in baroreceptor response to increased systemic arterial blood pressure"/>
    <property type="evidence" value="ECO:0007669"/>
    <property type="project" value="Ensembl"/>
</dbReference>
<dbReference type="GO" id="GO:0150099">
    <property type="term" value="P:neuron-glial cell signaling"/>
    <property type="evidence" value="ECO:0000250"/>
    <property type="project" value="ARUK-UCL"/>
</dbReference>
<dbReference type="GO" id="GO:0001994">
    <property type="term" value="P:norepinephrine-epinephrine vasoconstriction involved in regulation of systemic arterial blood pressure"/>
    <property type="evidence" value="ECO:0007669"/>
    <property type="project" value="Ensembl"/>
</dbReference>
<dbReference type="GO" id="GO:0071882">
    <property type="term" value="P:phospholipase C-activating adrenergic receptor signaling pathway"/>
    <property type="evidence" value="ECO:0000250"/>
    <property type="project" value="BHF-UCL"/>
</dbReference>
<dbReference type="GO" id="GO:0007200">
    <property type="term" value="P:phospholipase C-activating G protein-coupled receptor signaling pathway"/>
    <property type="evidence" value="ECO:0000318"/>
    <property type="project" value="GO_Central"/>
</dbReference>
<dbReference type="GO" id="GO:0097195">
    <property type="term" value="P:pilomotor reflex"/>
    <property type="evidence" value="ECO:0007669"/>
    <property type="project" value="Ensembl"/>
</dbReference>
<dbReference type="GO" id="GO:0045760">
    <property type="term" value="P:positive regulation of action potential"/>
    <property type="evidence" value="ECO:0000250"/>
    <property type="project" value="BHF-UCL"/>
</dbReference>
<dbReference type="GO" id="GO:0060452">
    <property type="term" value="P:positive regulation of cardiac muscle contraction"/>
    <property type="evidence" value="ECO:0000250"/>
    <property type="project" value="BHF-UCL"/>
</dbReference>
<dbReference type="GO" id="GO:0010613">
    <property type="term" value="P:positive regulation of cardiac muscle hypertrophy"/>
    <property type="evidence" value="ECO:0007669"/>
    <property type="project" value="Ensembl"/>
</dbReference>
<dbReference type="GO" id="GO:0007204">
    <property type="term" value="P:positive regulation of cytosolic calcium ion concentration"/>
    <property type="evidence" value="ECO:0000250"/>
    <property type="project" value="BHF-UCL"/>
</dbReference>
<dbReference type="GO" id="GO:0070374">
    <property type="term" value="P:positive regulation of ERK1 and ERK2 cascade"/>
    <property type="evidence" value="ECO:0000250"/>
    <property type="project" value="BHF-UCL"/>
</dbReference>
<dbReference type="GO" id="GO:0001996">
    <property type="term" value="P:positive regulation of heart rate by epinephrine-norepinephrine"/>
    <property type="evidence" value="ECO:0007669"/>
    <property type="project" value="Ensembl"/>
</dbReference>
<dbReference type="GO" id="GO:0043410">
    <property type="term" value="P:positive regulation of MAPK cascade"/>
    <property type="evidence" value="ECO:0000314"/>
    <property type="project" value="UniProtKB"/>
</dbReference>
<dbReference type="GO" id="GO:0045987">
    <property type="term" value="P:positive regulation of smooth muscle contraction"/>
    <property type="evidence" value="ECO:0007669"/>
    <property type="project" value="Ensembl"/>
</dbReference>
<dbReference type="GO" id="GO:0032230">
    <property type="term" value="P:positive regulation of synaptic transmission, GABAergic"/>
    <property type="evidence" value="ECO:0000250"/>
    <property type="project" value="BHF-UCL"/>
</dbReference>
<dbReference type="GO" id="GO:0001997">
    <property type="term" value="P:positive regulation of the force of heart contraction by epinephrine-norepinephrine"/>
    <property type="evidence" value="ECO:0007669"/>
    <property type="project" value="Ensembl"/>
</dbReference>
<dbReference type="GO" id="GO:0045907">
    <property type="term" value="P:positive regulation of vasoconstriction"/>
    <property type="evidence" value="ECO:0000250"/>
    <property type="project" value="BHF-UCL"/>
</dbReference>
<dbReference type="GO" id="GO:0009725">
    <property type="term" value="P:response to hormone"/>
    <property type="evidence" value="ECO:0000250"/>
    <property type="project" value="BHF-UCL"/>
</dbReference>
<dbReference type="GO" id="GO:0009410">
    <property type="term" value="P:response to xenobiotic stimulus"/>
    <property type="evidence" value="ECO:0000250"/>
    <property type="project" value="BHF-UCL"/>
</dbReference>
<dbReference type="GO" id="GO:0007165">
    <property type="term" value="P:signal transduction"/>
    <property type="evidence" value="ECO:0000304"/>
    <property type="project" value="ProtInc"/>
</dbReference>
<dbReference type="GO" id="GO:0006939">
    <property type="term" value="P:smooth muscle contraction"/>
    <property type="evidence" value="ECO:0000304"/>
    <property type="project" value="ProtInc"/>
</dbReference>
<dbReference type="CDD" id="cd15325">
    <property type="entry name" value="7tmA_alpha1A_AR"/>
    <property type="match status" value="1"/>
</dbReference>
<dbReference type="FunFam" id="1.20.1070.10:FF:000027">
    <property type="entry name" value="alpha-1A adrenergic receptor"/>
    <property type="match status" value="1"/>
</dbReference>
<dbReference type="Gene3D" id="1.20.1070.10">
    <property type="entry name" value="Rhodopsin 7-helix transmembrane proteins"/>
    <property type="match status" value="1"/>
</dbReference>
<dbReference type="InterPro" id="IPR002233">
    <property type="entry name" value="ADR_fam"/>
</dbReference>
<dbReference type="InterPro" id="IPR001004">
    <property type="entry name" value="ADRA1A_rcpt"/>
</dbReference>
<dbReference type="InterPro" id="IPR000276">
    <property type="entry name" value="GPCR_Rhodpsn"/>
</dbReference>
<dbReference type="InterPro" id="IPR017452">
    <property type="entry name" value="GPCR_Rhodpsn_7TM"/>
</dbReference>
<dbReference type="PANTHER" id="PTHR24248">
    <property type="entry name" value="ADRENERGIC RECEPTOR-RELATED G-PROTEIN COUPLED RECEPTOR"/>
    <property type="match status" value="1"/>
</dbReference>
<dbReference type="PANTHER" id="PTHR24248:SF16">
    <property type="entry name" value="ALPHA-1A ADRENERGIC RECEPTOR"/>
    <property type="match status" value="1"/>
</dbReference>
<dbReference type="Pfam" id="PF00001">
    <property type="entry name" value="7tm_1"/>
    <property type="match status" value="1"/>
</dbReference>
<dbReference type="PRINTS" id="PR01103">
    <property type="entry name" value="ADRENERGICR"/>
</dbReference>
<dbReference type="PRINTS" id="PR00557">
    <property type="entry name" value="ADRENRGCA1AR"/>
</dbReference>
<dbReference type="PRINTS" id="PR00237">
    <property type="entry name" value="GPCRRHODOPSN"/>
</dbReference>
<dbReference type="SMART" id="SM01381">
    <property type="entry name" value="7TM_GPCR_Srsx"/>
    <property type="match status" value="1"/>
</dbReference>
<dbReference type="SUPFAM" id="SSF81321">
    <property type="entry name" value="Family A G protein-coupled receptor-like"/>
    <property type="match status" value="1"/>
</dbReference>
<dbReference type="PROSITE" id="PS00237">
    <property type="entry name" value="G_PROTEIN_RECEP_F1_1"/>
    <property type="match status" value="1"/>
</dbReference>
<dbReference type="PROSITE" id="PS50262">
    <property type="entry name" value="G_PROTEIN_RECEP_F1_2"/>
    <property type="match status" value="1"/>
</dbReference>
<keyword id="KW-0002">3D-structure</keyword>
<keyword id="KW-0025">Alternative splicing</keyword>
<keyword id="KW-1003">Cell membrane</keyword>
<keyword id="KW-0963">Cytoplasm</keyword>
<keyword id="KW-1015">Disulfide bond</keyword>
<keyword id="KW-0297">G-protein coupled receptor</keyword>
<keyword id="KW-0325">Glycoprotein</keyword>
<keyword id="KW-0449">Lipoprotein</keyword>
<keyword id="KW-0472">Membrane</keyword>
<keyword id="KW-0539">Nucleus</keyword>
<keyword id="KW-0564">Palmitate</keyword>
<keyword id="KW-0597">Phosphoprotein</keyword>
<keyword id="KW-1267">Proteomics identification</keyword>
<keyword id="KW-0675">Receptor</keyword>
<keyword id="KW-1185">Reference proteome</keyword>
<keyword id="KW-0807">Transducer</keyword>
<keyword id="KW-0812">Transmembrane</keyword>
<keyword id="KW-1133">Transmembrane helix</keyword>
<organism>
    <name type="scientific">Homo sapiens</name>
    <name type="common">Human</name>
    <dbReference type="NCBI Taxonomy" id="9606"/>
    <lineage>
        <taxon>Eukaryota</taxon>
        <taxon>Metazoa</taxon>
        <taxon>Chordata</taxon>
        <taxon>Craniata</taxon>
        <taxon>Vertebrata</taxon>
        <taxon>Euteleostomi</taxon>
        <taxon>Mammalia</taxon>
        <taxon>Eutheria</taxon>
        <taxon>Euarchontoglires</taxon>
        <taxon>Primates</taxon>
        <taxon>Haplorrhini</taxon>
        <taxon>Catarrhini</taxon>
        <taxon>Hominidae</taxon>
        <taxon>Homo</taxon>
    </lineage>
</organism>
<accession>P35348</accession>
<accession>A8K0I3</accession>
<accession>B0ZBD1</accession>
<accession>B0ZBD2</accession>
<accession>B0ZBD4</accession>
<accession>B0ZBD5</accession>
<accession>B0ZBD6</accession>
<accession>B0ZBD8</accession>
<accession>B0ZBD9</accession>
<accession>O60451</accession>
<accession>Q13675</accession>
<accession>Q13729</accession>
<accession>Q4VBM7</accession>
<accession>Q6RUJ4</accession>
<accession>Q6RUJ5</accession>
<accession>Q6RUJ7</accession>
<accession>Q6RUJ8</accession>
<accession>Q6RUJ9</accession>
<accession>Q96RE8</accession>
<accession>Q9UD63</accession>
<accession>Q9UD67</accession>